<evidence type="ECO:0000256" key="1">
    <source>
        <dbReference type="SAM" id="MobiDB-lite"/>
    </source>
</evidence>
<evidence type="ECO:0000269" key="2">
    <source>
    </source>
</evidence>
<evidence type="ECO:0000305" key="3"/>
<sequence length="300" mass="33895">MATVVYQSYFESQHFEPRALRLRLSSHTNPQLSTPLKSHFQNSSIAPQDNPITINAASLPSSSPNPSSNSDTNSGSWSFLESLSNSSSNDKEKKTLPLFQSPSSRRTLSDESLALCTESLGSETGSDIIHEDMFSISSELQTMETRTTSTTSNPSRQDRKRNTMASLPPPLTSMIGFDCIEVKSHRENGRLVMMATRPPPRNRCLQDRSNGCVRLAILIDSDDHIETETKEEKEEEEEETIETVRDNEEEIPEYKEEEEEKEEEIKVKGVEKVQRSRRCIEGDRENRGFLNWESLCVATS</sequence>
<protein>
    <recommendedName>
        <fullName>Protein FANTASTIC FOUR 4</fullName>
    </recommendedName>
</protein>
<keyword id="KW-1185">Reference proteome</keyword>
<comment type="function">
    <text evidence="2">Regulates the size of the shoot meristem by modulating the CLV3-WUS feedback loop. Can repress WUS but is under negative control by CLV3.</text>
</comment>
<comment type="tissue specificity">
    <text evidence="2">Expressed in the shoot apex and young siliques. Detected in provascular and vascular tissue, but not in the vegetative meristem. In inflorescences, restricted to the base of the flower and to the vasculature of the stem and the pedicels, but absent from young flowers. Detected in the center of the inflorescence meristem.</text>
</comment>
<comment type="developmental stage">
    <text evidence="2">Expressed throughout development. Decreased expression in the shoot apex during the transition to flowering. Expressed in developing embryos from the early heart stage until torpedo stage.</text>
</comment>
<comment type="similarity">
    <text evidence="3">Belongs to the fantastic four family.</text>
</comment>
<feature type="chain" id="PRO_0000405263" description="Protein FANTASTIC FOUR 4">
    <location>
        <begin position="1"/>
        <end position="300"/>
    </location>
</feature>
<feature type="domain" description="FAF">
    <location>
        <begin position="166"/>
        <end position="217"/>
    </location>
</feature>
<feature type="region of interest" description="Disordered" evidence="1">
    <location>
        <begin position="30"/>
        <end position="104"/>
    </location>
</feature>
<feature type="region of interest" description="Disordered" evidence="1">
    <location>
        <begin position="142"/>
        <end position="170"/>
    </location>
</feature>
<feature type="region of interest" description="Disordered" evidence="1">
    <location>
        <begin position="227"/>
        <end position="264"/>
    </location>
</feature>
<feature type="compositionally biased region" description="Polar residues" evidence="1">
    <location>
        <begin position="30"/>
        <end position="56"/>
    </location>
</feature>
<feature type="compositionally biased region" description="Low complexity" evidence="1">
    <location>
        <begin position="58"/>
        <end position="88"/>
    </location>
</feature>
<feature type="compositionally biased region" description="Low complexity" evidence="1">
    <location>
        <begin position="142"/>
        <end position="151"/>
    </location>
</feature>
<feature type="compositionally biased region" description="Acidic residues" evidence="1">
    <location>
        <begin position="233"/>
        <end position="262"/>
    </location>
</feature>
<accession>Q9SFG6</accession>
<reference key="1">
    <citation type="journal article" date="2000" name="Nature">
        <title>Sequence and analysis of chromosome 3 of the plant Arabidopsis thaliana.</title>
        <authorList>
            <person name="Salanoubat M."/>
            <person name="Lemcke K."/>
            <person name="Rieger M."/>
            <person name="Ansorge W."/>
            <person name="Unseld M."/>
            <person name="Fartmann B."/>
            <person name="Valle G."/>
            <person name="Bloecker H."/>
            <person name="Perez-Alonso M."/>
            <person name="Obermaier B."/>
            <person name="Delseny M."/>
            <person name="Boutry M."/>
            <person name="Grivell L.A."/>
            <person name="Mache R."/>
            <person name="Puigdomenech P."/>
            <person name="De Simone V."/>
            <person name="Choisne N."/>
            <person name="Artiguenave F."/>
            <person name="Robert C."/>
            <person name="Brottier P."/>
            <person name="Wincker P."/>
            <person name="Cattolico L."/>
            <person name="Weissenbach J."/>
            <person name="Saurin W."/>
            <person name="Quetier F."/>
            <person name="Schaefer M."/>
            <person name="Mueller-Auer S."/>
            <person name="Gabel C."/>
            <person name="Fuchs M."/>
            <person name="Benes V."/>
            <person name="Wurmbach E."/>
            <person name="Drzonek H."/>
            <person name="Erfle H."/>
            <person name="Jordan N."/>
            <person name="Bangert S."/>
            <person name="Wiedelmann R."/>
            <person name="Kranz H."/>
            <person name="Voss H."/>
            <person name="Holland R."/>
            <person name="Brandt P."/>
            <person name="Nyakatura G."/>
            <person name="Vezzi A."/>
            <person name="D'Angelo M."/>
            <person name="Pallavicini A."/>
            <person name="Toppo S."/>
            <person name="Simionati B."/>
            <person name="Conrad A."/>
            <person name="Hornischer K."/>
            <person name="Kauer G."/>
            <person name="Loehnert T.-H."/>
            <person name="Nordsiek G."/>
            <person name="Reichelt J."/>
            <person name="Scharfe M."/>
            <person name="Schoen O."/>
            <person name="Bargues M."/>
            <person name="Terol J."/>
            <person name="Climent J."/>
            <person name="Navarro P."/>
            <person name="Collado C."/>
            <person name="Perez-Perez A."/>
            <person name="Ottenwaelder B."/>
            <person name="Duchemin D."/>
            <person name="Cooke R."/>
            <person name="Laudie M."/>
            <person name="Berger-Llauro C."/>
            <person name="Purnelle B."/>
            <person name="Masuy D."/>
            <person name="de Haan M."/>
            <person name="Maarse A.C."/>
            <person name="Alcaraz J.-P."/>
            <person name="Cottet A."/>
            <person name="Casacuberta E."/>
            <person name="Monfort A."/>
            <person name="Argiriou A."/>
            <person name="Flores M."/>
            <person name="Liguori R."/>
            <person name="Vitale D."/>
            <person name="Mannhaupt G."/>
            <person name="Haase D."/>
            <person name="Schoof H."/>
            <person name="Rudd S."/>
            <person name="Zaccaria P."/>
            <person name="Mewes H.-W."/>
            <person name="Mayer K.F.X."/>
            <person name="Kaul S."/>
            <person name="Town C.D."/>
            <person name="Koo H.L."/>
            <person name="Tallon L.J."/>
            <person name="Jenkins J."/>
            <person name="Rooney T."/>
            <person name="Rizzo M."/>
            <person name="Walts A."/>
            <person name="Utterback T."/>
            <person name="Fujii C.Y."/>
            <person name="Shea T.P."/>
            <person name="Creasy T.H."/>
            <person name="Haas B."/>
            <person name="Maiti R."/>
            <person name="Wu D."/>
            <person name="Peterson J."/>
            <person name="Van Aken S."/>
            <person name="Pai G."/>
            <person name="Militscher J."/>
            <person name="Sellers P."/>
            <person name="Gill J.E."/>
            <person name="Feldblyum T.V."/>
            <person name="Preuss D."/>
            <person name="Lin X."/>
            <person name="Nierman W.C."/>
            <person name="Salzberg S.L."/>
            <person name="White O."/>
            <person name="Venter J.C."/>
            <person name="Fraser C.M."/>
            <person name="Kaneko T."/>
            <person name="Nakamura Y."/>
            <person name="Sato S."/>
            <person name="Kato T."/>
            <person name="Asamizu E."/>
            <person name="Sasamoto S."/>
            <person name="Kimura T."/>
            <person name="Idesawa K."/>
            <person name="Kawashima K."/>
            <person name="Kishida Y."/>
            <person name="Kiyokawa C."/>
            <person name="Kohara M."/>
            <person name="Matsumoto M."/>
            <person name="Matsuno A."/>
            <person name="Muraki A."/>
            <person name="Nakayama S."/>
            <person name="Nakazaki N."/>
            <person name="Shinpo S."/>
            <person name="Takeuchi C."/>
            <person name="Wada T."/>
            <person name="Watanabe A."/>
            <person name="Yamada M."/>
            <person name="Yasuda M."/>
            <person name="Tabata S."/>
        </authorList>
    </citation>
    <scope>NUCLEOTIDE SEQUENCE [LARGE SCALE GENOMIC DNA]</scope>
    <source>
        <strain>cv. Columbia</strain>
    </source>
</reference>
<reference key="2">
    <citation type="journal article" date="2017" name="Plant J.">
        <title>Araport11: a complete reannotation of the Arabidopsis thaliana reference genome.</title>
        <authorList>
            <person name="Cheng C.Y."/>
            <person name="Krishnakumar V."/>
            <person name="Chan A.P."/>
            <person name="Thibaud-Nissen F."/>
            <person name="Schobel S."/>
            <person name="Town C.D."/>
        </authorList>
    </citation>
    <scope>GENOME REANNOTATION</scope>
    <source>
        <strain>cv. Columbia</strain>
    </source>
</reference>
<reference key="3">
    <citation type="journal article" date="2010" name="BMC Plant Biol.">
        <title>The FANTASTIC FOUR proteins influence shoot meristem size in Arabidopsis thaliana.</title>
        <authorList>
            <person name="Wahl V."/>
            <person name="Brand L.H."/>
            <person name="Guo Y.L."/>
            <person name="Schmid M."/>
        </authorList>
    </citation>
    <scope>FUNCTION</scope>
    <scope>DEVELOPMENTAL STAGE</scope>
    <scope>TISSUE SPECIFICITY</scope>
    <source>
        <strain>cv. Columbia</strain>
    </source>
</reference>
<dbReference type="EMBL" id="AC013454">
    <property type="protein sequence ID" value="AAF23215.1"/>
    <property type="molecule type" value="Genomic_DNA"/>
</dbReference>
<dbReference type="EMBL" id="CP002686">
    <property type="protein sequence ID" value="AEE74331.1"/>
    <property type="molecule type" value="Genomic_DNA"/>
</dbReference>
<dbReference type="RefSeq" id="NP_187253.1">
    <property type="nucleotide sequence ID" value="NM_111476.2"/>
</dbReference>
<dbReference type="FunCoup" id="Q9SFG6">
    <property type="interactions" value="9"/>
</dbReference>
<dbReference type="STRING" id="3702.Q9SFG6"/>
<dbReference type="PaxDb" id="3702-AT3G06020.1"/>
<dbReference type="EnsemblPlants" id="AT3G06020.1">
    <property type="protein sequence ID" value="AT3G06020.1"/>
    <property type="gene ID" value="AT3G06020"/>
</dbReference>
<dbReference type="GeneID" id="819773"/>
<dbReference type="Gramene" id="AT3G06020.1">
    <property type="protein sequence ID" value="AT3G06020.1"/>
    <property type="gene ID" value="AT3G06020"/>
</dbReference>
<dbReference type="KEGG" id="ath:AT3G06020"/>
<dbReference type="Araport" id="AT3G06020"/>
<dbReference type="TAIR" id="AT3G06020">
    <property type="gene designation" value="FAF4"/>
</dbReference>
<dbReference type="eggNOG" id="ENOG502QVU6">
    <property type="taxonomic scope" value="Eukaryota"/>
</dbReference>
<dbReference type="HOGENOM" id="CLU_053779_0_0_1"/>
<dbReference type="InParanoid" id="Q9SFG6"/>
<dbReference type="OMA" id="CHGLQSH"/>
<dbReference type="OrthoDB" id="1916983at2759"/>
<dbReference type="PhylomeDB" id="Q9SFG6"/>
<dbReference type="PRO" id="PR:Q9SFG6"/>
<dbReference type="Proteomes" id="UP000006548">
    <property type="component" value="Chromosome 3"/>
</dbReference>
<dbReference type="ExpressionAtlas" id="Q9SFG6">
    <property type="expression patterns" value="baseline and differential"/>
</dbReference>
<dbReference type="GO" id="GO:0010075">
    <property type="term" value="P:regulation of meristem growth"/>
    <property type="evidence" value="ECO:0000315"/>
    <property type="project" value="UniProtKB"/>
</dbReference>
<dbReference type="InterPro" id="IPR021410">
    <property type="entry name" value="FAF"/>
</dbReference>
<dbReference type="InterPro" id="IPR046431">
    <property type="entry name" value="FAF_dom"/>
</dbReference>
<dbReference type="PANTHER" id="PTHR33155">
    <property type="entry name" value="FANTASTIC FOUR-LIKE PROTEIN (DUF3049)"/>
    <property type="match status" value="1"/>
</dbReference>
<dbReference type="PANTHER" id="PTHR33155:SF15">
    <property type="entry name" value="PROTEIN FANTASTIC FOUR 4"/>
    <property type="match status" value="1"/>
</dbReference>
<dbReference type="Pfam" id="PF11250">
    <property type="entry name" value="FAF"/>
    <property type="match status" value="1"/>
</dbReference>
<organism>
    <name type="scientific">Arabidopsis thaliana</name>
    <name type="common">Mouse-ear cress</name>
    <dbReference type="NCBI Taxonomy" id="3702"/>
    <lineage>
        <taxon>Eukaryota</taxon>
        <taxon>Viridiplantae</taxon>
        <taxon>Streptophyta</taxon>
        <taxon>Embryophyta</taxon>
        <taxon>Tracheophyta</taxon>
        <taxon>Spermatophyta</taxon>
        <taxon>Magnoliopsida</taxon>
        <taxon>eudicotyledons</taxon>
        <taxon>Gunneridae</taxon>
        <taxon>Pentapetalae</taxon>
        <taxon>rosids</taxon>
        <taxon>malvids</taxon>
        <taxon>Brassicales</taxon>
        <taxon>Brassicaceae</taxon>
        <taxon>Camelineae</taxon>
        <taxon>Arabidopsis</taxon>
    </lineage>
</organism>
<name>FAF4_ARATH</name>
<gene>
    <name type="primary">FAF4</name>
    <name type="ordered locus">At3g06020</name>
    <name type="ORF">F2O10.2</name>
</gene>
<proteinExistence type="evidence at transcript level"/>